<reference key="1">
    <citation type="submission" date="2006-08" db="EMBL/GenBank/DDBJ databases">
        <title>Complete sequence of chromosome 1 of Burkholderia cenocepacia HI2424.</title>
        <authorList>
            <person name="Copeland A."/>
            <person name="Lucas S."/>
            <person name="Lapidus A."/>
            <person name="Barry K."/>
            <person name="Detter J.C."/>
            <person name="Glavina del Rio T."/>
            <person name="Hammon N."/>
            <person name="Israni S."/>
            <person name="Pitluck S."/>
            <person name="Chain P."/>
            <person name="Malfatti S."/>
            <person name="Shin M."/>
            <person name="Vergez L."/>
            <person name="Schmutz J."/>
            <person name="Larimer F."/>
            <person name="Land M."/>
            <person name="Hauser L."/>
            <person name="Kyrpides N."/>
            <person name="Kim E."/>
            <person name="LiPuma J.J."/>
            <person name="Gonzalez C.F."/>
            <person name="Konstantinidis K."/>
            <person name="Tiedje J.M."/>
            <person name="Richardson P."/>
        </authorList>
    </citation>
    <scope>NUCLEOTIDE SEQUENCE [LARGE SCALE GENOMIC DNA]</scope>
    <source>
        <strain>HI2424</strain>
    </source>
</reference>
<keyword id="KW-0963">Cytoplasm</keyword>
<keyword id="KW-0690">Ribosome biogenesis</keyword>
<comment type="function">
    <text evidence="1">Required for maturation of 30S ribosomal subunits.</text>
</comment>
<comment type="subcellular location">
    <subcellularLocation>
        <location evidence="1">Cytoplasm</location>
    </subcellularLocation>
</comment>
<comment type="similarity">
    <text evidence="1">Belongs to the RimP family.</text>
</comment>
<accession>A0K6X3</accession>
<name>RIMP_BURCH</name>
<proteinExistence type="inferred from homology"/>
<sequence>MQLTELIETTVTGLGYELVELERTGRGMLCIYIDQPAGISLEDCEKVTRQLQHVLTVENIDYERLEVSSPGLDRPLKKLADFERFAGSEVSVTLKKPLDGRKTYRGILHAPNGETIGLEFEGKKGEAAMLDFTLADIDKARLIPQVDFRSRK</sequence>
<gene>
    <name evidence="1" type="primary">rimP</name>
    <name type="ordered locus">Bcen2424_1498</name>
</gene>
<organism>
    <name type="scientific">Burkholderia cenocepacia (strain HI2424)</name>
    <dbReference type="NCBI Taxonomy" id="331272"/>
    <lineage>
        <taxon>Bacteria</taxon>
        <taxon>Pseudomonadati</taxon>
        <taxon>Pseudomonadota</taxon>
        <taxon>Betaproteobacteria</taxon>
        <taxon>Burkholderiales</taxon>
        <taxon>Burkholderiaceae</taxon>
        <taxon>Burkholderia</taxon>
        <taxon>Burkholderia cepacia complex</taxon>
    </lineage>
</organism>
<feature type="chain" id="PRO_1000064689" description="Ribosome maturation factor RimP">
    <location>
        <begin position="1"/>
        <end position="152"/>
    </location>
</feature>
<dbReference type="EMBL" id="CP000458">
    <property type="protein sequence ID" value="ABK08250.1"/>
    <property type="molecule type" value="Genomic_DNA"/>
</dbReference>
<dbReference type="RefSeq" id="WP_006476167.1">
    <property type="nucleotide sequence ID" value="NC_008542.1"/>
</dbReference>
<dbReference type="SMR" id="A0K6X3"/>
<dbReference type="GeneID" id="93192232"/>
<dbReference type="KEGG" id="bch:Bcen2424_1498"/>
<dbReference type="HOGENOM" id="CLU_070525_1_0_4"/>
<dbReference type="GO" id="GO:0005829">
    <property type="term" value="C:cytosol"/>
    <property type="evidence" value="ECO:0007669"/>
    <property type="project" value="TreeGrafter"/>
</dbReference>
<dbReference type="GO" id="GO:0000028">
    <property type="term" value="P:ribosomal small subunit assembly"/>
    <property type="evidence" value="ECO:0007669"/>
    <property type="project" value="TreeGrafter"/>
</dbReference>
<dbReference type="GO" id="GO:0006412">
    <property type="term" value="P:translation"/>
    <property type="evidence" value="ECO:0007669"/>
    <property type="project" value="TreeGrafter"/>
</dbReference>
<dbReference type="CDD" id="cd01734">
    <property type="entry name" value="YlxS_C"/>
    <property type="match status" value="1"/>
</dbReference>
<dbReference type="Gene3D" id="2.30.30.180">
    <property type="entry name" value="Ribosome maturation factor RimP, C-terminal domain"/>
    <property type="match status" value="1"/>
</dbReference>
<dbReference type="Gene3D" id="3.30.300.70">
    <property type="entry name" value="RimP-like superfamily, N-terminal"/>
    <property type="match status" value="1"/>
</dbReference>
<dbReference type="HAMAP" id="MF_01077">
    <property type="entry name" value="RimP"/>
    <property type="match status" value="1"/>
</dbReference>
<dbReference type="InterPro" id="IPR003728">
    <property type="entry name" value="Ribosome_maturation_RimP"/>
</dbReference>
<dbReference type="InterPro" id="IPR028998">
    <property type="entry name" value="RimP_C"/>
</dbReference>
<dbReference type="InterPro" id="IPR036847">
    <property type="entry name" value="RimP_C_sf"/>
</dbReference>
<dbReference type="InterPro" id="IPR028989">
    <property type="entry name" value="RimP_N"/>
</dbReference>
<dbReference type="InterPro" id="IPR035956">
    <property type="entry name" value="RimP_N_sf"/>
</dbReference>
<dbReference type="NCBIfam" id="NF000929">
    <property type="entry name" value="PRK00092.2-1"/>
    <property type="match status" value="1"/>
</dbReference>
<dbReference type="PANTHER" id="PTHR33867">
    <property type="entry name" value="RIBOSOME MATURATION FACTOR RIMP"/>
    <property type="match status" value="1"/>
</dbReference>
<dbReference type="PANTHER" id="PTHR33867:SF1">
    <property type="entry name" value="RIBOSOME MATURATION FACTOR RIMP"/>
    <property type="match status" value="1"/>
</dbReference>
<dbReference type="Pfam" id="PF17384">
    <property type="entry name" value="DUF150_C"/>
    <property type="match status" value="1"/>
</dbReference>
<dbReference type="Pfam" id="PF02576">
    <property type="entry name" value="RimP_N"/>
    <property type="match status" value="1"/>
</dbReference>
<dbReference type="SUPFAM" id="SSF74942">
    <property type="entry name" value="YhbC-like, C-terminal domain"/>
    <property type="match status" value="1"/>
</dbReference>
<dbReference type="SUPFAM" id="SSF75420">
    <property type="entry name" value="YhbC-like, N-terminal domain"/>
    <property type="match status" value="1"/>
</dbReference>
<protein>
    <recommendedName>
        <fullName evidence="1">Ribosome maturation factor RimP</fullName>
    </recommendedName>
</protein>
<evidence type="ECO:0000255" key="1">
    <source>
        <dbReference type="HAMAP-Rule" id="MF_01077"/>
    </source>
</evidence>